<organism>
    <name type="scientific">Oryza sativa subsp. japonica</name>
    <name type="common">Rice</name>
    <dbReference type="NCBI Taxonomy" id="39947"/>
    <lineage>
        <taxon>Eukaryota</taxon>
        <taxon>Viridiplantae</taxon>
        <taxon>Streptophyta</taxon>
        <taxon>Embryophyta</taxon>
        <taxon>Tracheophyta</taxon>
        <taxon>Spermatophyta</taxon>
        <taxon>Magnoliopsida</taxon>
        <taxon>Liliopsida</taxon>
        <taxon>Poales</taxon>
        <taxon>Poaceae</taxon>
        <taxon>BOP clade</taxon>
        <taxon>Oryzoideae</taxon>
        <taxon>Oryzeae</taxon>
        <taxon>Oryzinae</taxon>
        <taxon>Oryza</taxon>
        <taxon>Oryza sativa</taxon>
    </lineage>
</organism>
<protein>
    <recommendedName>
        <fullName>Cysteine proteinase inhibitor 5</fullName>
    </recommendedName>
    <alternativeName>
        <fullName>Oryzacystatin V</fullName>
        <shortName>OC-V</shortName>
    </alternativeName>
    <alternativeName>
        <fullName>Oryzacystatin-5</fullName>
    </alternativeName>
</protein>
<comment type="function">
    <text evidence="1">Specific inhibitor of cysteine proteinases. Probably involved in the regulation of endogenous processes and in defense against pests and pathogens (By similarity).</text>
</comment>
<comment type="subcellular location">
    <subcellularLocation>
        <location evidence="3">Secreted</location>
    </subcellularLocation>
</comment>
<comment type="similarity">
    <text evidence="3">Belongs to the cystatin family. Phytocystatin subfamily.</text>
</comment>
<gene>
    <name type="ordered locus">Os01g0915401</name>
    <name type="ordered locus">LOC_Os01g68670</name>
    <name type="ORF">OsJ_04531</name>
</gene>
<accession>Q0JGM8</accession>
<accession>A0A0P0VBX9</accession>
<accession>A3A0V9</accession>
<keyword id="KW-0611">Plant defense</keyword>
<keyword id="KW-0646">Protease inhibitor</keyword>
<keyword id="KW-1185">Reference proteome</keyword>
<keyword id="KW-0964">Secreted</keyword>
<keyword id="KW-0732">Signal</keyword>
<keyword id="KW-0789">Thiol protease inhibitor</keyword>
<feature type="signal peptide" evidence="2">
    <location>
        <begin position="1"/>
        <end position="25"/>
    </location>
</feature>
<feature type="chain" id="PRO_0000277502" description="Cysteine proteinase inhibitor 5">
    <location>
        <begin position="26"/>
        <end position="148"/>
    </location>
</feature>
<feature type="short sequence motif" description="Secondary area of contact" evidence="1">
    <location>
        <begin position="99"/>
        <end position="103"/>
    </location>
</feature>
<feature type="site" description="Reactive site" evidence="1">
    <location>
        <position position="50"/>
    </location>
</feature>
<dbReference type="EMBL" id="AP008207">
    <property type="protein sequence ID" value="BAH91439.1"/>
    <property type="molecule type" value="Genomic_DNA"/>
</dbReference>
<dbReference type="EMBL" id="AP014957">
    <property type="protein sequence ID" value="BAS75872.1"/>
    <property type="molecule type" value="Genomic_DNA"/>
</dbReference>
<dbReference type="EMBL" id="CM000138">
    <property type="protein sequence ID" value="EAZ14606.1"/>
    <property type="molecule type" value="Genomic_DNA"/>
</dbReference>
<dbReference type="RefSeq" id="XP_015621051.1">
    <property type="nucleotide sequence ID" value="XM_015765565.1"/>
</dbReference>
<dbReference type="SMR" id="Q0JGM8"/>
<dbReference type="FunCoup" id="Q0JGM8">
    <property type="interactions" value="131"/>
</dbReference>
<dbReference type="STRING" id="39947.Q0JGM8"/>
<dbReference type="PaxDb" id="39947-Q0JGM8"/>
<dbReference type="EnsemblPlants" id="Os01t0915401-00">
    <property type="protein sequence ID" value="Os01t0915401-00"/>
    <property type="gene ID" value="Os01g0915401"/>
</dbReference>
<dbReference type="Gramene" id="Os01t0915401-00">
    <property type="protein sequence ID" value="Os01t0915401-00"/>
    <property type="gene ID" value="Os01g0915401"/>
</dbReference>
<dbReference type="KEGG" id="dosa:Os01g0915401"/>
<dbReference type="eggNOG" id="ENOG502S4YZ">
    <property type="taxonomic scope" value="Eukaryota"/>
</dbReference>
<dbReference type="HOGENOM" id="CLU_113093_0_1_1"/>
<dbReference type="InParanoid" id="Q0JGM8"/>
<dbReference type="OMA" id="YYANDDN"/>
<dbReference type="OrthoDB" id="1908104at2759"/>
<dbReference type="Proteomes" id="UP000000763">
    <property type="component" value="Chromosome 1"/>
</dbReference>
<dbReference type="Proteomes" id="UP000007752">
    <property type="component" value="Chromosome 1"/>
</dbReference>
<dbReference type="Proteomes" id="UP000059680">
    <property type="component" value="Chromosome 1"/>
</dbReference>
<dbReference type="GO" id="GO:0005576">
    <property type="term" value="C:extracellular region"/>
    <property type="evidence" value="ECO:0007669"/>
    <property type="project" value="UniProtKB-SubCell"/>
</dbReference>
<dbReference type="GO" id="GO:0004869">
    <property type="term" value="F:cysteine-type endopeptidase inhibitor activity"/>
    <property type="evidence" value="ECO:0007669"/>
    <property type="project" value="UniProtKB-KW"/>
</dbReference>
<dbReference type="GO" id="GO:0006952">
    <property type="term" value="P:defense response"/>
    <property type="evidence" value="ECO:0007669"/>
    <property type="project" value="UniProtKB-KW"/>
</dbReference>
<dbReference type="CDD" id="cd00042">
    <property type="entry name" value="CY"/>
    <property type="match status" value="1"/>
</dbReference>
<dbReference type="Gene3D" id="3.10.450.10">
    <property type="match status" value="1"/>
</dbReference>
<dbReference type="InterPro" id="IPR000010">
    <property type="entry name" value="Cystatin_dom"/>
</dbReference>
<dbReference type="InterPro" id="IPR046350">
    <property type="entry name" value="Cystatin_sf"/>
</dbReference>
<dbReference type="PANTHER" id="PTHR47373">
    <property type="entry name" value="CYSTEINE PROTEINASE INHIBITOR 2"/>
    <property type="match status" value="1"/>
</dbReference>
<dbReference type="PANTHER" id="PTHR47373:SF1">
    <property type="entry name" value="CYSTEINE PROTEINASE INHIBITOR 2"/>
    <property type="match status" value="1"/>
</dbReference>
<dbReference type="Pfam" id="PF16845">
    <property type="entry name" value="SQAPI"/>
    <property type="match status" value="1"/>
</dbReference>
<dbReference type="SMART" id="SM00043">
    <property type="entry name" value="CY"/>
    <property type="match status" value="1"/>
</dbReference>
<dbReference type="SUPFAM" id="SSF54403">
    <property type="entry name" value="Cystatin/monellin"/>
    <property type="match status" value="1"/>
</dbReference>
<reference key="1">
    <citation type="journal article" date="2005" name="Nature">
        <title>The map-based sequence of the rice genome.</title>
        <authorList>
            <consortium name="International rice genome sequencing project (IRGSP)"/>
        </authorList>
    </citation>
    <scope>NUCLEOTIDE SEQUENCE [LARGE SCALE GENOMIC DNA]</scope>
    <source>
        <strain>cv. Nipponbare</strain>
    </source>
</reference>
<reference key="2">
    <citation type="journal article" date="2008" name="Nucleic Acids Res.">
        <title>The rice annotation project database (RAP-DB): 2008 update.</title>
        <authorList>
            <consortium name="The rice annotation project (RAP)"/>
        </authorList>
    </citation>
    <scope>GENOME REANNOTATION</scope>
    <source>
        <strain>cv. Nipponbare</strain>
    </source>
</reference>
<reference key="3">
    <citation type="journal article" date="2013" name="Rice">
        <title>Improvement of the Oryza sativa Nipponbare reference genome using next generation sequence and optical map data.</title>
        <authorList>
            <person name="Kawahara Y."/>
            <person name="de la Bastide M."/>
            <person name="Hamilton J.P."/>
            <person name="Kanamori H."/>
            <person name="McCombie W.R."/>
            <person name="Ouyang S."/>
            <person name="Schwartz D.C."/>
            <person name="Tanaka T."/>
            <person name="Wu J."/>
            <person name="Zhou S."/>
            <person name="Childs K.L."/>
            <person name="Davidson R.M."/>
            <person name="Lin H."/>
            <person name="Quesada-Ocampo L."/>
            <person name="Vaillancourt B."/>
            <person name="Sakai H."/>
            <person name="Lee S.S."/>
            <person name="Kim J."/>
            <person name="Numa H."/>
            <person name="Itoh T."/>
            <person name="Buell C.R."/>
            <person name="Matsumoto T."/>
        </authorList>
    </citation>
    <scope>GENOME REANNOTATION</scope>
    <source>
        <strain>cv. Nipponbare</strain>
    </source>
</reference>
<reference key="4">
    <citation type="journal article" date="2005" name="PLoS Biol.">
        <title>The genomes of Oryza sativa: a history of duplications.</title>
        <authorList>
            <person name="Yu J."/>
            <person name="Wang J."/>
            <person name="Lin W."/>
            <person name="Li S."/>
            <person name="Li H."/>
            <person name="Zhou J."/>
            <person name="Ni P."/>
            <person name="Dong W."/>
            <person name="Hu S."/>
            <person name="Zeng C."/>
            <person name="Zhang J."/>
            <person name="Zhang Y."/>
            <person name="Li R."/>
            <person name="Xu Z."/>
            <person name="Li S."/>
            <person name="Li X."/>
            <person name="Zheng H."/>
            <person name="Cong L."/>
            <person name="Lin L."/>
            <person name="Yin J."/>
            <person name="Geng J."/>
            <person name="Li G."/>
            <person name="Shi J."/>
            <person name="Liu J."/>
            <person name="Lv H."/>
            <person name="Li J."/>
            <person name="Wang J."/>
            <person name="Deng Y."/>
            <person name="Ran L."/>
            <person name="Shi X."/>
            <person name="Wang X."/>
            <person name="Wu Q."/>
            <person name="Li C."/>
            <person name="Ren X."/>
            <person name="Wang J."/>
            <person name="Wang X."/>
            <person name="Li D."/>
            <person name="Liu D."/>
            <person name="Zhang X."/>
            <person name="Ji Z."/>
            <person name="Zhao W."/>
            <person name="Sun Y."/>
            <person name="Zhang Z."/>
            <person name="Bao J."/>
            <person name="Han Y."/>
            <person name="Dong L."/>
            <person name="Ji J."/>
            <person name="Chen P."/>
            <person name="Wu S."/>
            <person name="Liu J."/>
            <person name="Xiao Y."/>
            <person name="Bu D."/>
            <person name="Tan J."/>
            <person name="Yang L."/>
            <person name="Ye C."/>
            <person name="Zhang J."/>
            <person name="Xu J."/>
            <person name="Zhou Y."/>
            <person name="Yu Y."/>
            <person name="Zhang B."/>
            <person name="Zhuang S."/>
            <person name="Wei H."/>
            <person name="Liu B."/>
            <person name="Lei M."/>
            <person name="Yu H."/>
            <person name="Li Y."/>
            <person name="Xu H."/>
            <person name="Wei S."/>
            <person name="He X."/>
            <person name="Fang L."/>
            <person name="Zhang Z."/>
            <person name="Zhang Y."/>
            <person name="Huang X."/>
            <person name="Su Z."/>
            <person name="Tong W."/>
            <person name="Li J."/>
            <person name="Tong Z."/>
            <person name="Li S."/>
            <person name="Ye J."/>
            <person name="Wang L."/>
            <person name="Fang L."/>
            <person name="Lei T."/>
            <person name="Chen C.-S."/>
            <person name="Chen H.-C."/>
            <person name="Xu Z."/>
            <person name="Li H."/>
            <person name="Huang H."/>
            <person name="Zhang F."/>
            <person name="Xu H."/>
            <person name="Li N."/>
            <person name="Zhao C."/>
            <person name="Li S."/>
            <person name="Dong L."/>
            <person name="Huang Y."/>
            <person name="Li L."/>
            <person name="Xi Y."/>
            <person name="Qi Q."/>
            <person name="Li W."/>
            <person name="Zhang B."/>
            <person name="Hu W."/>
            <person name="Zhang Y."/>
            <person name="Tian X."/>
            <person name="Jiao Y."/>
            <person name="Liang X."/>
            <person name="Jin J."/>
            <person name="Gao L."/>
            <person name="Zheng W."/>
            <person name="Hao B."/>
            <person name="Liu S.-M."/>
            <person name="Wang W."/>
            <person name="Yuan L."/>
            <person name="Cao M."/>
            <person name="McDermott J."/>
            <person name="Samudrala R."/>
            <person name="Wang J."/>
            <person name="Wong G.K.-S."/>
            <person name="Yang H."/>
        </authorList>
    </citation>
    <scope>NUCLEOTIDE SEQUENCE [LARGE SCALE GENOMIC DNA]</scope>
    <source>
        <strain>cv. Nipponbare</strain>
    </source>
</reference>
<reference key="5">
    <citation type="journal article" date="2005" name="Mol. Genet. Genomics">
        <title>Comparative phylogenetic analysis of cystatin gene families from arabidopsis, rice and barley.</title>
        <authorList>
            <person name="Martinez M."/>
            <person name="Abraham Z."/>
            <person name="Carbonero P."/>
            <person name="Diaz I."/>
        </authorList>
    </citation>
    <scope>GENE FAMILY</scope>
</reference>
<evidence type="ECO:0000250" key="1"/>
<evidence type="ECO:0000255" key="2"/>
<evidence type="ECO:0000305" key="3"/>
<proteinExistence type="inferred from homology"/>
<name>CYT5_ORYSJ</name>
<sequence>MASKLYYAVAPLVLVLLLLAPLSSARLAAAAAADDDGQWPAGGGRGRKVGGRTDVEDVEGNREVQELGLFCVVEHNRRGGSATRGRGLVFSRVVAAQTQVVSGIKYYLRIAAQEADDELVFDAVVVVKAWVPSREMVSFVPAAELPGY</sequence>